<organism>
    <name type="scientific">Bacillus subtilis (strain 168)</name>
    <dbReference type="NCBI Taxonomy" id="224308"/>
    <lineage>
        <taxon>Bacteria</taxon>
        <taxon>Bacillati</taxon>
        <taxon>Bacillota</taxon>
        <taxon>Bacilli</taxon>
        <taxon>Bacillales</taxon>
        <taxon>Bacillaceae</taxon>
        <taxon>Bacillus</taxon>
    </lineage>
</organism>
<sequence>MSYVNELKSKHGGLTAHIVKTEKFKTVSLIFKMLAPLTKDQVTKRALLPHVLLRGTKSHPKTAGLRSYLDELYGTSVSADLTKKGERHVITFRLEIPNEKYLKDQTPLLEKGLQLLAELVFSPALEGDAFQSQYVAQEKRTLKQRIQAVYDDKMRYSNLRLIQEMCKNDPYALHVNGEIDDVDDITAEQLYETYQSAIQKDQLDLYVVGDVDSNQVQSAIDKYFKTEERTLGMIENNHADEKVQPKEVIDEEDVKQGKLNIGYRTSITYTDQDYPALQVFNGLFGGFSHSKLFINVREKASLAYYAASRIESFKGLLMVMSGIEVKNFEQAVSIIAEQFQAMKNGDFSEQDIAQTKAVIRNQVLETIDTAYGLSEFLYQQAAAQVEIPIEDFLANIENVTKEDIIKAGEKIQLDTTYFLKGTEGAS</sequence>
<keyword id="KW-0479">Metal-binding</keyword>
<keyword id="KW-1185">Reference proteome</keyword>
<keyword id="KW-0862">Zinc</keyword>
<protein>
    <recommendedName>
        <fullName>Probable inactive metalloprotease YmfF</fullName>
    </recommendedName>
</protein>
<proteinExistence type="inferred from homology"/>
<feature type="chain" id="PRO_0000389639" description="Probable inactive metalloprotease YmfF">
    <location>
        <begin position="1"/>
        <end position="426"/>
    </location>
</feature>
<feature type="binding site" evidence="1">
    <location>
        <position position="50"/>
    </location>
    <ligand>
        <name>Zn(2+)</name>
        <dbReference type="ChEBI" id="CHEBI:29105"/>
    </ligand>
</feature>
<feature type="binding site" evidence="1">
    <location>
        <position position="138"/>
    </location>
    <ligand>
        <name>Zn(2+)</name>
        <dbReference type="ChEBI" id="CHEBI:29105"/>
    </ligand>
</feature>
<reference key="1">
    <citation type="journal article" date="1997" name="Nature">
        <title>The complete genome sequence of the Gram-positive bacterium Bacillus subtilis.</title>
        <authorList>
            <person name="Kunst F."/>
            <person name="Ogasawara N."/>
            <person name="Moszer I."/>
            <person name="Albertini A.M."/>
            <person name="Alloni G."/>
            <person name="Azevedo V."/>
            <person name="Bertero M.G."/>
            <person name="Bessieres P."/>
            <person name="Bolotin A."/>
            <person name="Borchert S."/>
            <person name="Borriss R."/>
            <person name="Boursier L."/>
            <person name="Brans A."/>
            <person name="Braun M."/>
            <person name="Brignell S.C."/>
            <person name="Bron S."/>
            <person name="Brouillet S."/>
            <person name="Bruschi C.V."/>
            <person name="Caldwell B."/>
            <person name="Capuano V."/>
            <person name="Carter N.M."/>
            <person name="Choi S.-K."/>
            <person name="Codani J.-J."/>
            <person name="Connerton I.F."/>
            <person name="Cummings N.J."/>
            <person name="Daniel R.A."/>
            <person name="Denizot F."/>
            <person name="Devine K.M."/>
            <person name="Duesterhoeft A."/>
            <person name="Ehrlich S.D."/>
            <person name="Emmerson P.T."/>
            <person name="Entian K.-D."/>
            <person name="Errington J."/>
            <person name="Fabret C."/>
            <person name="Ferrari E."/>
            <person name="Foulger D."/>
            <person name="Fritz C."/>
            <person name="Fujita M."/>
            <person name="Fujita Y."/>
            <person name="Fuma S."/>
            <person name="Galizzi A."/>
            <person name="Galleron N."/>
            <person name="Ghim S.-Y."/>
            <person name="Glaser P."/>
            <person name="Goffeau A."/>
            <person name="Golightly E.J."/>
            <person name="Grandi G."/>
            <person name="Guiseppi G."/>
            <person name="Guy B.J."/>
            <person name="Haga K."/>
            <person name="Haiech J."/>
            <person name="Harwood C.R."/>
            <person name="Henaut A."/>
            <person name="Hilbert H."/>
            <person name="Holsappel S."/>
            <person name="Hosono S."/>
            <person name="Hullo M.-F."/>
            <person name="Itaya M."/>
            <person name="Jones L.-M."/>
            <person name="Joris B."/>
            <person name="Karamata D."/>
            <person name="Kasahara Y."/>
            <person name="Klaerr-Blanchard M."/>
            <person name="Klein C."/>
            <person name="Kobayashi Y."/>
            <person name="Koetter P."/>
            <person name="Koningstein G."/>
            <person name="Krogh S."/>
            <person name="Kumano M."/>
            <person name="Kurita K."/>
            <person name="Lapidus A."/>
            <person name="Lardinois S."/>
            <person name="Lauber J."/>
            <person name="Lazarevic V."/>
            <person name="Lee S.-M."/>
            <person name="Levine A."/>
            <person name="Liu H."/>
            <person name="Masuda S."/>
            <person name="Mauel C."/>
            <person name="Medigue C."/>
            <person name="Medina N."/>
            <person name="Mellado R.P."/>
            <person name="Mizuno M."/>
            <person name="Moestl D."/>
            <person name="Nakai S."/>
            <person name="Noback M."/>
            <person name="Noone D."/>
            <person name="O'Reilly M."/>
            <person name="Ogawa K."/>
            <person name="Ogiwara A."/>
            <person name="Oudega B."/>
            <person name="Park S.-H."/>
            <person name="Parro V."/>
            <person name="Pohl T.M."/>
            <person name="Portetelle D."/>
            <person name="Porwollik S."/>
            <person name="Prescott A.M."/>
            <person name="Presecan E."/>
            <person name="Pujic P."/>
            <person name="Purnelle B."/>
            <person name="Rapoport G."/>
            <person name="Rey M."/>
            <person name="Reynolds S."/>
            <person name="Rieger M."/>
            <person name="Rivolta C."/>
            <person name="Rocha E."/>
            <person name="Roche B."/>
            <person name="Rose M."/>
            <person name="Sadaie Y."/>
            <person name="Sato T."/>
            <person name="Scanlan E."/>
            <person name="Schleich S."/>
            <person name="Schroeter R."/>
            <person name="Scoffone F."/>
            <person name="Sekiguchi J."/>
            <person name="Sekowska A."/>
            <person name="Seror S.J."/>
            <person name="Serror P."/>
            <person name="Shin B.-S."/>
            <person name="Soldo B."/>
            <person name="Sorokin A."/>
            <person name="Tacconi E."/>
            <person name="Takagi T."/>
            <person name="Takahashi H."/>
            <person name="Takemaru K."/>
            <person name="Takeuchi M."/>
            <person name="Tamakoshi A."/>
            <person name="Tanaka T."/>
            <person name="Terpstra P."/>
            <person name="Tognoni A."/>
            <person name="Tosato V."/>
            <person name="Uchiyama S."/>
            <person name="Vandenbol M."/>
            <person name="Vannier F."/>
            <person name="Vassarotti A."/>
            <person name="Viari A."/>
            <person name="Wambutt R."/>
            <person name="Wedler E."/>
            <person name="Wedler H."/>
            <person name="Weitzenegger T."/>
            <person name="Winters P."/>
            <person name="Wipat A."/>
            <person name="Yamamoto H."/>
            <person name="Yamane K."/>
            <person name="Yasumoto K."/>
            <person name="Yata K."/>
            <person name="Yoshida K."/>
            <person name="Yoshikawa H.-F."/>
            <person name="Zumstein E."/>
            <person name="Yoshikawa H."/>
            <person name="Danchin A."/>
        </authorList>
    </citation>
    <scope>NUCLEOTIDE SEQUENCE [LARGE SCALE GENOMIC DNA]</scope>
    <source>
        <strain>168</strain>
    </source>
</reference>
<reference key="2">
    <citation type="journal article" date="2009" name="Microbiology">
        <title>From a consortium sequence to a unified sequence: the Bacillus subtilis 168 reference genome a decade later.</title>
        <authorList>
            <person name="Barbe V."/>
            <person name="Cruveiller S."/>
            <person name="Kunst F."/>
            <person name="Lenoble P."/>
            <person name="Meurice G."/>
            <person name="Sekowska A."/>
            <person name="Vallenet D."/>
            <person name="Wang T."/>
            <person name="Moszer I."/>
            <person name="Medigue C."/>
            <person name="Danchin A."/>
        </authorList>
    </citation>
    <scope>SEQUENCE REVISION</scope>
</reference>
<dbReference type="EMBL" id="AL009126">
    <property type="protein sequence ID" value="CAB13557.2"/>
    <property type="molecule type" value="Genomic_DNA"/>
</dbReference>
<dbReference type="RefSeq" id="NP_389566.2">
    <property type="nucleotide sequence ID" value="NC_000964.3"/>
</dbReference>
<dbReference type="SMR" id="O31764"/>
<dbReference type="FunCoup" id="O31764">
    <property type="interactions" value="9"/>
</dbReference>
<dbReference type="STRING" id="224308.BSU16845"/>
<dbReference type="jPOST" id="O31764"/>
<dbReference type="PaxDb" id="224308-BSU16845"/>
<dbReference type="EnsemblBacteria" id="CAB13557">
    <property type="protein sequence ID" value="CAB13557"/>
    <property type="gene ID" value="BSU_16845"/>
</dbReference>
<dbReference type="GeneID" id="940141"/>
<dbReference type="KEGG" id="bsu:BSU16845"/>
<dbReference type="PATRIC" id="fig|224308.179.peg.1826"/>
<dbReference type="eggNOG" id="COG0612">
    <property type="taxonomic scope" value="Bacteria"/>
</dbReference>
<dbReference type="InParanoid" id="O31764"/>
<dbReference type="OrthoDB" id="9762085at2"/>
<dbReference type="PhylomeDB" id="O31764"/>
<dbReference type="BioCyc" id="BSUB:BSU16845-MONOMER"/>
<dbReference type="Proteomes" id="UP000001570">
    <property type="component" value="Chromosome"/>
</dbReference>
<dbReference type="GO" id="GO:0046872">
    <property type="term" value="F:metal ion binding"/>
    <property type="evidence" value="ECO:0007669"/>
    <property type="project" value="UniProtKB-KW"/>
</dbReference>
<dbReference type="Gene3D" id="3.30.830.10">
    <property type="entry name" value="Metalloenzyme, LuxS/M16 peptidase-like"/>
    <property type="match status" value="2"/>
</dbReference>
<dbReference type="InterPro" id="IPR011249">
    <property type="entry name" value="Metalloenz_LuxS/M16"/>
</dbReference>
<dbReference type="InterPro" id="IPR050361">
    <property type="entry name" value="MPP/UQCRC_Complex"/>
</dbReference>
<dbReference type="InterPro" id="IPR007863">
    <property type="entry name" value="Peptidase_M16_C"/>
</dbReference>
<dbReference type="NCBIfam" id="NF047422">
    <property type="entry name" value="YfmF_fam"/>
    <property type="match status" value="1"/>
</dbReference>
<dbReference type="PANTHER" id="PTHR11851:SF186">
    <property type="entry name" value="INACTIVE METALLOPROTEASE YMFF-RELATED"/>
    <property type="match status" value="1"/>
</dbReference>
<dbReference type="PANTHER" id="PTHR11851">
    <property type="entry name" value="METALLOPROTEASE"/>
    <property type="match status" value="1"/>
</dbReference>
<dbReference type="Pfam" id="PF05193">
    <property type="entry name" value="Peptidase_M16_C"/>
    <property type="match status" value="1"/>
</dbReference>
<dbReference type="SUPFAM" id="SSF63411">
    <property type="entry name" value="LuxS/MPP-like metallohydrolase"/>
    <property type="match status" value="2"/>
</dbReference>
<comment type="similarity">
    <text evidence="2">Belongs to the peptidase M16 family.</text>
</comment>
<comment type="caution">
    <text evidence="2">In contrast to other members of the family, it lacks one conserved zinc-binding site and the active site.</text>
</comment>
<accession>O31764</accession>
<name>YMFF_BACSU</name>
<evidence type="ECO:0000250" key="1"/>
<evidence type="ECO:0000305" key="2"/>
<gene>
    <name type="primary">ymfF</name>
    <name type="ordered locus">BSU16845</name>
    <name type="ORF">BSU16840</name>
</gene>